<evidence type="ECO:0000255" key="1">
    <source>
        <dbReference type="HAMAP-Rule" id="MF_01217"/>
    </source>
</evidence>
<evidence type="ECO:0000255" key="2">
    <source>
        <dbReference type="PROSITE-ProRule" id="PRU00258"/>
    </source>
</evidence>
<proteinExistence type="inferred from homology"/>
<feature type="chain" id="PRO_1000139008" description="Acyl carrier protein">
    <location>
        <begin position="1"/>
        <end position="78"/>
    </location>
</feature>
<feature type="domain" description="Carrier" evidence="2">
    <location>
        <begin position="2"/>
        <end position="77"/>
    </location>
</feature>
<feature type="modified residue" description="O-(pantetheine 4'-phosphoryl)serine" evidence="2">
    <location>
        <position position="37"/>
    </location>
</feature>
<sequence>MSSIEERVKKIVAEQLGVKEEEVKNEASFVEDLGADSLDTVELVMALEEEFETEIPDEEAEKITTVQLAIDYINANLA</sequence>
<gene>
    <name evidence="1" type="primary">acpP</name>
    <name type="ordered locus">CJA_1677</name>
</gene>
<keyword id="KW-0963">Cytoplasm</keyword>
<keyword id="KW-0275">Fatty acid biosynthesis</keyword>
<keyword id="KW-0276">Fatty acid metabolism</keyword>
<keyword id="KW-0444">Lipid biosynthesis</keyword>
<keyword id="KW-0443">Lipid metabolism</keyword>
<keyword id="KW-0596">Phosphopantetheine</keyword>
<keyword id="KW-0597">Phosphoprotein</keyword>
<keyword id="KW-1185">Reference proteome</keyword>
<dbReference type="EMBL" id="CP000934">
    <property type="protein sequence ID" value="ACE85351.1"/>
    <property type="molecule type" value="Genomic_DNA"/>
</dbReference>
<dbReference type="RefSeq" id="WP_012487300.1">
    <property type="nucleotide sequence ID" value="NC_010995.1"/>
</dbReference>
<dbReference type="SMR" id="B3PEV2"/>
<dbReference type="STRING" id="498211.CJA_1677"/>
<dbReference type="KEGG" id="cja:CJA_1677"/>
<dbReference type="eggNOG" id="COG0236">
    <property type="taxonomic scope" value="Bacteria"/>
</dbReference>
<dbReference type="HOGENOM" id="CLU_108696_5_1_6"/>
<dbReference type="OrthoDB" id="9804551at2"/>
<dbReference type="UniPathway" id="UPA00094"/>
<dbReference type="Proteomes" id="UP000001036">
    <property type="component" value="Chromosome"/>
</dbReference>
<dbReference type="GO" id="GO:0005829">
    <property type="term" value="C:cytosol"/>
    <property type="evidence" value="ECO:0007669"/>
    <property type="project" value="TreeGrafter"/>
</dbReference>
<dbReference type="GO" id="GO:0016020">
    <property type="term" value="C:membrane"/>
    <property type="evidence" value="ECO:0007669"/>
    <property type="project" value="GOC"/>
</dbReference>
<dbReference type="GO" id="GO:0000035">
    <property type="term" value="F:acyl binding"/>
    <property type="evidence" value="ECO:0007669"/>
    <property type="project" value="TreeGrafter"/>
</dbReference>
<dbReference type="GO" id="GO:0000036">
    <property type="term" value="F:acyl carrier activity"/>
    <property type="evidence" value="ECO:0007669"/>
    <property type="project" value="UniProtKB-UniRule"/>
</dbReference>
<dbReference type="GO" id="GO:0009245">
    <property type="term" value="P:lipid A biosynthetic process"/>
    <property type="evidence" value="ECO:0007669"/>
    <property type="project" value="TreeGrafter"/>
</dbReference>
<dbReference type="FunFam" id="1.10.1200.10:FF:000001">
    <property type="entry name" value="Acyl carrier protein"/>
    <property type="match status" value="1"/>
</dbReference>
<dbReference type="Gene3D" id="1.10.1200.10">
    <property type="entry name" value="ACP-like"/>
    <property type="match status" value="1"/>
</dbReference>
<dbReference type="HAMAP" id="MF_01217">
    <property type="entry name" value="Acyl_carrier"/>
    <property type="match status" value="1"/>
</dbReference>
<dbReference type="InterPro" id="IPR003231">
    <property type="entry name" value="ACP"/>
</dbReference>
<dbReference type="InterPro" id="IPR036736">
    <property type="entry name" value="ACP-like_sf"/>
</dbReference>
<dbReference type="InterPro" id="IPR009081">
    <property type="entry name" value="PP-bd_ACP"/>
</dbReference>
<dbReference type="InterPro" id="IPR006162">
    <property type="entry name" value="Ppantetheine_attach_site"/>
</dbReference>
<dbReference type="NCBIfam" id="TIGR00517">
    <property type="entry name" value="acyl_carrier"/>
    <property type="match status" value="1"/>
</dbReference>
<dbReference type="NCBIfam" id="NF002148">
    <property type="entry name" value="PRK00982.1-2"/>
    <property type="match status" value="1"/>
</dbReference>
<dbReference type="NCBIfam" id="NF002149">
    <property type="entry name" value="PRK00982.1-3"/>
    <property type="match status" value="1"/>
</dbReference>
<dbReference type="NCBIfam" id="NF002150">
    <property type="entry name" value="PRK00982.1-4"/>
    <property type="match status" value="1"/>
</dbReference>
<dbReference type="NCBIfam" id="NF002151">
    <property type="entry name" value="PRK00982.1-5"/>
    <property type="match status" value="1"/>
</dbReference>
<dbReference type="PANTHER" id="PTHR20863">
    <property type="entry name" value="ACYL CARRIER PROTEIN"/>
    <property type="match status" value="1"/>
</dbReference>
<dbReference type="PANTHER" id="PTHR20863:SF76">
    <property type="entry name" value="CARRIER DOMAIN-CONTAINING PROTEIN"/>
    <property type="match status" value="1"/>
</dbReference>
<dbReference type="Pfam" id="PF00550">
    <property type="entry name" value="PP-binding"/>
    <property type="match status" value="1"/>
</dbReference>
<dbReference type="SUPFAM" id="SSF47336">
    <property type="entry name" value="ACP-like"/>
    <property type="match status" value="1"/>
</dbReference>
<dbReference type="PROSITE" id="PS50075">
    <property type="entry name" value="CARRIER"/>
    <property type="match status" value="1"/>
</dbReference>
<dbReference type="PROSITE" id="PS00012">
    <property type="entry name" value="PHOSPHOPANTETHEINE"/>
    <property type="match status" value="1"/>
</dbReference>
<protein>
    <recommendedName>
        <fullName evidence="1">Acyl carrier protein</fullName>
        <shortName evidence="1">ACP</shortName>
    </recommendedName>
</protein>
<organism>
    <name type="scientific">Cellvibrio japonicus (strain Ueda107)</name>
    <name type="common">Pseudomonas fluorescens subsp. cellulosa</name>
    <dbReference type="NCBI Taxonomy" id="498211"/>
    <lineage>
        <taxon>Bacteria</taxon>
        <taxon>Pseudomonadati</taxon>
        <taxon>Pseudomonadota</taxon>
        <taxon>Gammaproteobacteria</taxon>
        <taxon>Cellvibrionales</taxon>
        <taxon>Cellvibrionaceae</taxon>
        <taxon>Cellvibrio</taxon>
    </lineage>
</organism>
<accession>B3PEV2</accession>
<name>ACP_CELJU</name>
<reference key="1">
    <citation type="journal article" date="2008" name="J. Bacteriol.">
        <title>Insights into plant cell wall degradation from the genome sequence of the soil bacterium Cellvibrio japonicus.</title>
        <authorList>
            <person name="DeBoy R.T."/>
            <person name="Mongodin E.F."/>
            <person name="Fouts D.E."/>
            <person name="Tailford L.E."/>
            <person name="Khouri H."/>
            <person name="Emerson J.B."/>
            <person name="Mohamoud Y."/>
            <person name="Watkins K."/>
            <person name="Henrissat B."/>
            <person name="Gilbert H.J."/>
            <person name="Nelson K.E."/>
        </authorList>
    </citation>
    <scope>NUCLEOTIDE SEQUENCE [LARGE SCALE GENOMIC DNA]</scope>
    <source>
        <strain>Ueda107</strain>
    </source>
</reference>
<comment type="function">
    <text evidence="1">Carrier of the growing fatty acid chain in fatty acid biosynthesis.</text>
</comment>
<comment type="pathway">
    <text evidence="1">Lipid metabolism; fatty acid biosynthesis.</text>
</comment>
<comment type="subcellular location">
    <subcellularLocation>
        <location evidence="1">Cytoplasm</location>
    </subcellularLocation>
</comment>
<comment type="PTM">
    <text evidence="1">4'-phosphopantetheine is transferred from CoA to a specific serine of apo-ACP by AcpS. This modification is essential for activity because fatty acids are bound in thioester linkage to the sulfhydryl of the prosthetic group.</text>
</comment>
<comment type="similarity">
    <text evidence="1">Belongs to the acyl carrier protein (ACP) family.</text>
</comment>